<reference key="1">
    <citation type="submission" date="1997-11" db="EMBL/GenBank/DDBJ databases">
        <title>Nucleotide sequence of the 300-304 chromosomal segment of Bacillus subtilis.</title>
        <authorList>
            <person name="Lazarevic V."/>
            <person name="Soldo B."/>
            <person name="Rivolta C."/>
            <person name="Reynolds S."/>
            <person name="Mauel C."/>
            <person name="Karamata D."/>
        </authorList>
    </citation>
    <scope>NUCLEOTIDE SEQUENCE [GENOMIC DNA]</scope>
</reference>
<reference key="2">
    <citation type="journal article" date="1997" name="Nature">
        <title>The complete genome sequence of the Gram-positive bacterium Bacillus subtilis.</title>
        <authorList>
            <person name="Kunst F."/>
            <person name="Ogasawara N."/>
            <person name="Moszer I."/>
            <person name="Albertini A.M."/>
            <person name="Alloni G."/>
            <person name="Azevedo V."/>
            <person name="Bertero M.G."/>
            <person name="Bessieres P."/>
            <person name="Bolotin A."/>
            <person name="Borchert S."/>
            <person name="Borriss R."/>
            <person name="Boursier L."/>
            <person name="Brans A."/>
            <person name="Braun M."/>
            <person name="Brignell S.C."/>
            <person name="Bron S."/>
            <person name="Brouillet S."/>
            <person name="Bruschi C.V."/>
            <person name="Caldwell B."/>
            <person name="Capuano V."/>
            <person name="Carter N.M."/>
            <person name="Choi S.-K."/>
            <person name="Codani J.-J."/>
            <person name="Connerton I.F."/>
            <person name="Cummings N.J."/>
            <person name="Daniel R.A."/>
            <person name="Denizot F."/>
            <person name="Devine K.M."/>
            <person name="Duesterhoeft A."/>
            <person name="Ehrlich S.D."/>
            <person name="Emmerson P.T."/>
            <person name="Entian K.-D."/>
            <person name="Errington J."/>
            <person name="Fabret C."/>
            <person name="Ferrari E."/>
            <person name="Foulger D."/>
            <person name="Fritz C."/>
            <person name="Fujita M."/>
            <person name="Fujita Y."/>
            <person name="Fuma S."/>
            <person name="Galizzi A."/>
            <person name="Galleron N."/>
            <person name="Ghim S.-Y."/>
            <person name="Glaser P."/>
            <person name="Goffeau A."/>
            <person name="Golightly E.J."/>
            <person name="Grandi G."/>
            <person name="Guiseppi G."/>
            <person name="Guy B.J."/>
            <person name="Haga K."/>
            <person name="Haiech J."/>
            <person name="Harwood C.R."/>
            <person name="Henaut A."/>
            <person name="Hilbert H."/>
            <person name="Holsappel S."/>
            <person name="Hosono S."/>
            <person name="Hullo M.-F."/>
            <person name="Itaya M."/>
            <person name="Jones L.-M."/>
            <person name="Joris B."/>
            <person name="Karamata D."/>
            <person name="Kasahara Y."/>
            <person name="Klaerr-Blanchard M."/>
            <person name="Klein C."/>
            <person name="Kobayashi Y."/>
            <person name="Koetter P."/>
            <person name="Koningstein G."/>
            <person name="Krogh S."/>
            <person name="Kumano M."/>
            <person name="Kurita K."/>
            <person name="Lapidus A."/>
            <person name="Lardinois S."/>
            <person name="Lauber J."/>
            <person name="Lazarevic V."/>
            <person name="Lee S.-M."/>
            <person name="Levine A."/>
            <person name="Liu H."/>
            <person name="Masuda S."/>
            <person name="Mauel C."/>
            <person name="Medigue C."/>
            <person name="Medina N."/>
            <person name="Mellado R.P."/>
            <person name="Mizuno M."/>
            <person name="Moestl D."/>
            <person name="Nakai S."/>
            <person name="Noback M."/>
            <person name="Noone D."/>
            <person name="O'Reilly M."/>
            <person name="Ogawa K."/>
            <person name="Ogiwara A."/>
            <person name="Oudega B."/>
            <person name="Park S.-H."/>
            <person name="Parro V."/>
            <person name="Pohl T.M."/>
            <person name="Portetelle D."/>
            <person name="Porwollik S."/>
            <person name="Prescott A.M."/>
            <person name="Presecan E."/>
            <person name="Pujic P."/>
            <person name="Purnelle B."/>
            <person name="Rapoport G."/>
            <person name="Rey M."/>
            <person name="Reynolds S."/>
            <person name="Rieger M."/>
            <person name="Rivolta C."/>
            <person name="Rocha E."/>
            <person name="Roche B."/>
            <person name="Rose M."/>
            <person name="Sadaie Y."/>
            <person name="Sato T."/>
            <person name="Scanlan E."/>
            <person name="Schleich S."/>
            <person name="Schroeter R."/>
            <person name="Scoffone F."/>
            <person name="Sekiguchi J."/>
            <person name="Sekowska A."/>
            <person name="Seror S.J."/>
            <person name="Serror P."/>
            <person name="Shin B.-S."/>
            <person name="Soldo B."/>
            <person name="Sorokin A."/>
            <person name="Tacconi E."/>
            <person name="Takagi T."/>
            <person name="Takahashi H."/>
            <person name="Takemaru K."/>
            <person name="Takeuchi M."/>
            <person name="Tamakoshi A."/>
            <person name="Tanaka T."/>
            <person name="Terpstra P."/>
            <person name="Tognoni A."/>
            <person name="Tosato V."/>
            <person name="Uchiyama S."/>
            <person name="Vandenbol M."/>
            <person name="Vannier F."/>
            <person name="Vassarotti A."/>
            <person name="Viari A."/>
            <person name="Wambutt R."/>
            <person name="Wedler E."/>
            <person name="Wedler H."/>
            <person name="Weitzenegger T."/>
            <person name="Winters P."/>
            <person name="Wipat A."/>
            <person name="Yamamoto H."/>
            <person name="Yamane K."/>
            <person name="Yasumoto K."/>
            <person name="Yata K."/>
            <person name="Yoshida K."/>
            <person name="Yoshikawa H.-F."/>
            <person name="Zumstein E."/>
            <person name="Yoshikawa H."/>
            <person name="Danchin A."/>
        </authorList>
    </citation>
    <scope>NUCLEOTIDE SEQUENCE [LARGE SCALE GENOMIC DNA]</scope>
    <source>
        <strain>168</strain>
    </source>
</reference>
<reference key="3">
    <citation type="journal article" date="2011" name="J. Bacteriol.">
        <title>Regulon of the N-acetylglucosamine utilization regulator NagR in Bacillus subtilis.</title>
        <authorList>
            <person name="Bertram R."/>
            <person name="Rigali S."/>
            <person name="Wood N."/>
            <person name="Lulko A.T."/>
            <person name="Kuipers O.P."/>
            <person name="Titgemeyer F."/>
        </authorList>
    </citation>
    <scope>INDUCTION</scope>
</reference>
<reference key="4">
    <citation type="journal article" date="2013" name="PLoS ONE">
        <title>The use of amino sugars by Bacillus subtilis: presence of a unique operon for the catabolism of glucosamine.</title>
        <authorList>
            <person name="Gaugue I."/>
            <person name="Oberto J."/>
            <person name="Putzer H."/>
            <person name="Plumbridge J."/>
        </authorList>
    </citation>
    <scope>DISRUPTION PHENOTYPE</scope>
    <source>
        <strain>168</strain>
    </source>
</reference>
<reference evidence="6 7" key="5">
    <citation type="journal article" date="2005" name="J. Biol. Chem.">
        <title>Structure and kinetics of a monomeric glucosamine 6-phosphate deaminase: missing link of the NagB superfamily?</title>
        <authorList>
            <person name="Vincent F."/>
            <person name="Davies G.J."/>
            <person name="Brannigan J.A."/>
        </authorList>
    </citation>
    <scope>X-RAY CRYSTALLOGRAPHY (1.40 ANGSTROMS) IN COMPLEX WITH FRUCTOSE-6-PHOSPHATE</scope>
    <scope>FUNCTION</scope>
    <scope>CATALYTIC ACTIVITY</scope>
    <scope>ACTIVITY REGULATION</scope>
    <scope>BIOPHYSICOCHEMICAL PROPERTIES</scope>
    <scope>SUBUNIT</scope>
    <source>
        <strain>168</strain>
    </source>
</reference>
<dbReference type="EC" id="3.5.99.6" evidence="1 2"/>
<dbReference type="EMBL" id="AF017113">
    <property type="protein sequence ID" value="AAC67284.1"/>
    <property type="molecule type" value="Genomic_DNA"/>
</dbReference>
<dbReference type="EMBL" id="AL009126">
    <property type="protein sequence ID" value="CAB15507.1"/>
    <property type="molecule type" value="Genomic_DNA"/>
</dbReference>
<dbReference type="PIR" id="B69664">
    <property type="entry name" value="B69664"/>
</dbReference>
<dbReference type="RefSeq" id="WP_003228092.1">
    <property type="nucleotide sequence ID" value="NZ_OZ025638.1"/>
</dbReference>
<dbReference type="PDB" id="2BKV">
    <property type="method" value="X-ray"/>
    <property type="resolution" value="1.50 A"/>
    <property type="chains" value="A/B=1-242"/>
</dbReference>
<dbReference type="PDB" id="2BKX">
    <property type="method" value="X-ray"/>
    <property type="resolution" value="1.40 A"/>
    <property type="chains" value="A/B=1-242"/>
</dbReference>
<dbReference type="PDBsum" id="2BKV"/>
<dbReference type="PDBsum" id="2BKX"/>
<dbReference type="SMR" id="O35000"/>
<dbReference type="FunCoup" id="O35000">
    <property type="interactions" value="361"/>
</dbReference>
<dbReference type="STRING" id="224308.BSU35020"/>
<dbReference type="DrugBank" id="DB02726">
    <property type="generic name" value="2-Phosphoglycolic Acid"/>
</dbReference>
<dbReference type="DrugBank" id="DB04277">
    <property type="generic name" value="Fructose -6-Phosphate"/>
</dbReference>
<dbReference type="PaxDb" id="224308-BSU35020"/>
<dbReference type="EnsemblBacteria" id="CAB15507">
    <property type="protein sequence ID" value="CAB15507"/>
    <property type="gene ID" value="BSU_35020"/>
</dbReference>
<dbReference type="GeneID" id="936619"/>
<dbReference type="KEGG" id="bsu:BSU35020"/>
<dbReference type="PATRIC" id="fig|224308.179.peg.3790"/>
<dbReference type="eggNOG" id="COG0363">
    <property type="taxonomic scope" value="Bacteria"/>
</dbReference>
<dbReference type="InParanoid" id="O35000"/>
<dbReference type="OrthoDB" id="9791139at2"/>
<dbReference type="PhylomeDB" id="O35000"/>
<dbReference type="BioCyc" id="BSUB:BSU35020-MONOMER"/>
<dbReference type="BRENDA" id="3.5.99.6">
    <property type="organism ID" value="658"/>
</dbReference>
<dbReference type="SABIO-RK" id="O35000"/>
<dbReference type="UniPathway" id="UPA00629">
    <property type="reaction ID" value="UER00684"/>
</dbReference>
<dbReference type="EvolutionaryTrace" id="O35000"/>
<dbReference type="Proteomes" id="UP000001570">
    <property type="component" value="Chromosome"/>
</dbReference>
<dbReference type="GO" id="GO:0005737">
    <property type="term" value="C:cytoplasm"/>
    <property type="evidence" value="ECO:0000318"/>
    <property type="project" value="GO_Central"/>
</dbReference>
<dbReference type="GO" id="GO:0004342">
    <property type="term" value="F:glucosamine-6-phosphate deaminase activity"/>
    <property type="evidence" value="ECO:0000318"/>
    <property type="project" value="GO_Central"/>
</dbReference>
<dbReference type="GO" id="GO:0042802">
    <property type="term" value="F:identical protein binding"/>
    <property type="evidence" value="ECO:0000318"/>
    <property type="project" value="GO_Central"/>
</dbReference>
<dbReference type="GO" id="GO:0005975">
    <property type="term" value="P:carbohydrate metabolic process"/>
    <property type="evidence" value="ECO:0007669"/>
    <property type="project" value="InterPro"/>
</dbReference>
<dbReference type="GO" id="GO:0006043">
    <property type="term" value="P:glucosamine catabolic process"/>
    <property type="evidence" value="ECO:0000318"/>
    <property type="project" value="GO_Central"/>
</dbReference>
<dbReference type="GO" id="GO:0006046">
    <property type="term" value="P:N-acetylglucosamine catabolic process"/>
    <property type="evidence" value="ECO:0000318"/>
    <property type="project" value="GO_Central"/>
</dbReference>
<dbReference type="GO" id="GO:0019262">
    <property type="term" value="P:N-acetylneuraminate catabolic process"/>
    <property type="evidence" value="ECO:0000318"/>
    <property type="project" value="GO_Central"/>
</dbReference>
<dbReference type="CDD" id="cd01399">
    <property type="entry name" value="GlcN6P_deaminase"/>
    <property type="match status" value="1"/>
</dbReference>
<dbReference type="FunFam" id="3.40.50.1360:FF:000003">
    <property type="entry name" value="Glucosamine-6-phosphate deaminase"/>
    <property type="match status" value="1"/>
</dbReference>
<dbReference type="Gene3D" id="3.40.50.1360">
    <property type="match status" value="1"/>
</dbReference>
<dbReference type="HAMAP" id="MF_01241">
    <property type="entry name" value="GlcN6P_deamin"/>
    <property type="match status" value="1"/>
</dbReference>
<dbReference type="InterPro" id="IPR006148">
    <property type="entry name" value="Glc/Gal-6P_isomerase"/>
</dbReference>
<dbReference type="InterPro" id="IPR004547">
    <property type="entry name" value="Glucosamine6P_isomerase"/>
</dbReference>
<dbReference type="InterPro" id="IPR018321">
    <property type="entry name" value="Glucosamine6P_isomerase_CS"/>
</dbReference>
<dbReference type="InterPro" id="IPR037171">
    <property type="entry name" value="NagB/RpiA_transferase-like"/>
</dbReference>
<dbReference type="NCBIfam" id="TIGR00502">
    <property type="entry name" value="nagB"/>
    <property type="match status" value="1"/>
</dbReference>
<dbReference type="PANTHER" id="PTHR11280">
    <property type="entry name" value="GLUCOSAMINE-6-PHOSPHATE ISOMERASE"/>
    <property type="match status" value="1"/>
</dbReference>
<dbReference type="PANTHER" id="PTHR11280:SF5">
    <property type="entry name" value="GLUCOSAMINE-6-PHOSPHATE ISOMERASE"/>
    <property type="match status" value="1"/>
</dbReference>
<dbReference type="Pfam" id="PF01182">
    <property type="entry name" value="Glucosamine_iso"/>
    <property type="match status" value="1"/>
</dbReference>
<dbReference type="SUPFAM" id="SSF100950">
    <property type="entry name" value="NagB/RpiA/CoA transferase-like"/>
    <property type="match status" value="1"/>
</dbReference>
<dbReference type="PROSITE" id="PS01161">
    <property type="entry name" value="GLC_GALNAC_ISOMERASE"/>
    <property type="match status" value="1"/>
</dbReference>
<accession>O35000</accession>
<protein>
    <recommendedName>
        <fullName evidence="1 5">Glucosamine-6-phosphate deaminase 1</fullName>
        <ecNumber evidence="1 2">3.5.99.6</ecNumber>
    </recommendedName>
    <alternativeName>
        <fullName evidence="1">GlcN6P deaminase 1</fullName>
        <shortName evidence="1">GNPDA 1</shortName>
    </alternativeName>
    <alternativeName>
        <fullName evidence="1">Glucosamine-6-phosphate isomerase 1</fullName>
    </alternativeName>
</protein>
<sequence length="242" mass="26991">MKVMECQTYEELSQIAARITADTIKEKPDAVLGLATGGTPEGTYRQLIRLHQTENLSFQNITTVNLDEYAGLSSDDPNSYHFYMNDRFFQHIDSKPSRHFIPNGNADDLEAECRRYEQLVDSLGDTDIQLLGIGRNGHIGFNEPGTSFKSRTHVVTLNEQTRQANARYFPSIDSVPKKALTMGIQTILSSKRILLLISGKSKAEAVRKLLEGNISEDFPASALHLHSDVTVLIDREAASLRP</sequence>
<feature type="chain" id="PRO_0000160133" description="Glucosamine-6-phosphate deaminase 1">
    <location>
        <begin position="1"/>
        <end position="242"/>
    </location>
</feature>
<feature type="active site" description="Proton acceptor; for enolization step" evidence="1">
    <location>
        <position position="67"/>
    </location>
</feature>
<feature type="active site" description="For ring-opening step" evidence="1">
    <location>
        <position position="136"/>
    </location>
</feature>
<feature type="active site" description="Proton acceptor; for ring-opening step" evidence="1">
    <location>
        <position position="138"/>
    </location>
</feature>
<feature type="active site" description="For ring-opening step" evidence="1">
    <location>
        <position position="143"/>
    </location>
</feature>
<feature type="binding site" evidence="2 7">
    <location>
        <position position="36"/>
    </location>
    <ligand>
        <name>beta-D-fructose 6-phosphate</name>
        <dbReference type="ChEBI" id="CHEBI:57634"/>
    </ligand>
</feature>
<feature type="binding site" evidence="2 7">
    <location>
        <position position="38"/>
    </location>
    <ligand>
        <name>beta-D-fructose 6-phosphate</name>
        <dbReference type="ChEBI" id="CHEBI:57634"/>
    </ligand>
</feature>
<feature type="binding site" evidence="2 7">
    <location>
        <position position="39"/>
    </location>
    <ligand>
        <name>beta-D-fructose 6-phosphate</name>
        <dbReference type="ChEBI" id="CHEBI:57634"/>
    </ligand>
</feature>
<feature type="binding site" evidence="2 7">
    <location>
        <position position="67"/>
    </location>
    <ligand>
        <name>beta-D-fructose 6-phosphate</name>
        <dbReference type="ChEBI" id="CHEBI:57634"/>
    </ligand>
</feature>
<feature type="binding site" evidence="2 7">
    <location>
        <position position="138"/>
    </location>
    <ligand>
        <name>beta-D-fructose 6-phosphate</name>
        <dbReference type="ChEBI" id="CHEBI:57634"/>
    </ligand>
</feature>
<feature type="binding site" evidence="2 7">
    <location>
        <position position="140"/>
    </location>
    <ligand>
        <name>beta-D-fructose 6-phosphate</name>
        <dbReference type="ChEBI" id="CHEBI:57634"/>
    </ligand>
</feature>
<feature type="binding site" evidence="2 7">
    <location>
        <position position="167"/>
    </location>
    <ligand>
        <name>beta-D-fructose 6-phosphate</name>
        <dbReference type="ChEBI" id="CHEBI:57634"/>
    </ligand>
</feature>
<feature type="binding site" evidence="2 7">
    <location>
        <position position="202"/>
    </location>
    <ligand>
        <name>beta-D-fructose 6-phosphate</name>
        <dbReference type="ChEBI" id="CHEBI:57634"/>
    </ligand>
</feature>
<feature type="strand" evidence="8">
    <location>
        <begin position="2"/>
        <end position="8"/>
    </location>
</feature>
<feature type="helix" evidence="8">
    <location>
        <begin position="9"/>
        <end position="26"/>
    </location>
</feature>
<feature type="strand" evidence="8">
    <location>
        <begin position="31"/>
        <end position="34"/>
    </location>
</feature>
<feature type="helix" evidence="8">
    <location>
        <begin position="41"/>
        <end position="53"/>
    </location>
</feature>
<feature type="strand" evidence="8">
    <location>
        <begin position="62"/>
        <end position="69"/>
    </location>
</feature>
<feature type="helix" evidence="8">
    <location>
        <begin position="80"/>
        <end position="87"/>
    </location>
</feature>
<feature type="helix" evidence="8">
    <location>
        <begin position="89"/>
        <end position="91"/>
    </location>
</feature>
<feature type="helix" evidence="8">
    <location>
        <begin position="96"/>
        <end position="98"/>
    </location>
</feature>
<feature type="helix" evidence="8">
    <location>
        <begin position="109"/>
        <end position="122"/>
    </location>
</feature>
<feature type="strand" evidence="8">
    <location>
        <begin position="127"/>
        <end position="131"/>
    </location>
</feature>
<feature type="strand" evidence="8">
    <location>
        <begin position="152"/>
        <end position="156"/>
    </location>
</feature>
<feature type="helix" evidence="8">
    <location>
        <begin position="159"/>
        <end position="165"/>
    </location>
</feature>
<feature type="helix" evidence="8">
    <location>
        <begin position="166"/>
        <end position="168"/>
    </location>
</feature>
<feature type="strand" evidence="8">
    <location>
        <begin position="169"/>
        <end position="171"/>
    </location>
</feature>
<feature type="helix" evidence="8">
    <location>
        <begin position="172"/>
        <end position="174"/>
    </location>
</feature>
<feature type="strand" evidence="8">
    <location>
        <begin position="177"/>
        <end position="181"/>
    </location>
</feature>
<feature type="helix" evidence="8">
    <location>
        <begin position="184"/>
        <end position="188"/>
    </location>
</feature>
<feature type="strand" evidence="8">
    <location>
        <begin position="193"/>
        <end position="197"/>
    </location>
</feature>
<feature type="helix" evidence="8">
    <location>
        <begin position="200"/>
        <end position="202"/>
    </location>
</feature>
<feature type="helix" evidence="8">
    <location>
        <begin position="203"/>
        <end position="211"/>
    </location>
</feature>
<feature type="helix" evidence="8">
    <location>
        <begin position="219"/>
        <end position="225"/>
    </location>
</feature>
<feature type="strand" evidence="8">
    <location>
        <begin position="227"/>
        <end position="234"/>
    </location>
</feature>
<feature type="turn" evidence="8">
    <location>
        <begin position="235"/>
        <end position="240"/>
    </location>
</feature>
<gene>
    <name type="primary">nagB</name>
    <name type="ordered locus">BSU35020</name>
</gene>
<organism>
    <name type="scientific">Bacillus subtilis (strain 168)</name>
    <dbReference type="NCBI Taxonomy" id="224308"/>
    <lineage>
        <taxon>Bacteria</taxon>
        <taxon>Bacillati</taxon>
        <taxon>Bacillota</taxon>
        <taxon>Bacilli</taxon>
        <taxon>Bacillales</taxon>
        <taxon>Bacillaceae</taxon>
        <taxon>Bacillus</taxon>
    </lineage>
</organism>
<proteinExistence type="evidence at protein level"/>
<keyword id="KW-0002">3D-structure</keyword>
<keyword id="KW-0119">Carbohydrate metabolism</keyword>
<keyword id="KW-0378">Hydrolase</keyword>
<keyword id="KW-1185">Reference proteome</keyword>
<name>NAGB_BACSU</name>
<evidence type="ECO:0000255" key="1">
    <source>
        <dbReference type="HAMAP-Rule" id="MF_01241"/>
    </source>
</evidence>
<evidence type="ECO:0000269" key="2">
    <source>
    </source>
</evidence>
<evidence type="ECO:0000269" key="3">
    <source>
    </source>
</evidence>
<evidence type="ECO:0000269" key="4">
    <source>
    </source>
</evidence>
<evidence type="ECO:0000303" key="5">
    <source>
    </source>
</evidence>
<evidence type="ECO:0007744" key="6">
    <source>
        <dbReference type="PDB" id="2BKV"/>
    </source>
</evidence>
<evidence type="ECO:0007744" key="7">
    <source>
        <dbReference type="PDB" id="2BKX"/>
    </source>
</evidence>
<evidence type="ECO:0007829" key="8">
    <source>
        <dbReference type="PDB" id="2BKX"/>
    </source>
</evidence>
<comment type="function">
    <text evidence="1 2">Catalyzes the reversible isomerization-deamination of glucosamine 6-phosphate (GlcN6P) to form fructose 6-phosphate (Fru6P) and ammonium ion.</text>
</comment>
<comment type="catalytic activity">
    <reaction evidence="1 2">
        <text>alpha-D-glucosamine 6-phosphate + H2O = beta-D-fructose 6-phosphate + NH4(+)</text>
        <dbReference type="Rhea" id="RHEA:12172"/>
        <dbReference type="ChEBI" id="CHEBI:15377"/>
        <dbReference type="ChEBI" id="CHEBI:28938"/>
        <dbReference type="ChEBI" id="CHEBI:57634"/>
        <dbReference type="ChEBI" id="CHEBI:75989"/>
        <dbReference type="EC" id="3.5.99.6"/>
    </reaction>
</comment>
<comment type="activity regulation">
    <text evidence="2">Activity decreases at high substrate concentrations, which may reflect substrate inhibition (PubMed:15755726). Unlike the E.coli enzyme, is not regulated by an allosteric mechanism (PubMed:15755726).</text>
</comment>
<comment type="biophysicochemical properties">
    <kinetics>
        <KM evidence="2">0.13 mM for glucosamine 6-phosphate</KM>
        <text evidence="2">kcat is 28 sec(-1).</text>
    </kinetics>
</comment>
<comment type="pathway">
    <text evidence="1">Amino-sugar metabolism; N-acetylneuraminate degradation; D-fructose 6-phosphate from N-acetylneuraminate: step 5/5.</text>
</comment>
<comment type="subunit">
    <text evidence="2">Monomer.</text>
</comment>
<comment type="induction">
    <text evidence="3">Expression is repressed by the HTH-type transcriptional regulator NagR.</text>
</comment>
<comment type="disruption phenotype">
    <text evidence="4">Deletion of the gene has essentially no effect on growth on either glucosamine or N-acetylglucosamine (PubMed:23667565). The gamA-nagB double mutant cannot grow on glucosamine or N-acetylglucosamine (PubMed:23667565).</text>
</comment>
<comment type="miscellaneous">
    <text evidence="4">The gamA and nagB genes encode isozymes of GlcN6P deaminase (PubMed:23667565). The majority of the GlcN6P deaminase activity during growth on N-acetylglucosamine is provided by GamA and not by NagB (PubMed:23667565).</text>
</comment>
<comment type="similarity">
    <text evidence="1">Belongs to the glucosamine/galactosamine-6-phosphate isomerase family. NagB subfamily.</text>
</comment>